<organism>
    <name type="scientific">Kocuria rhizophila (strain ATCC 9341 / DSM 348 / NBRC 103217 / DC2201)</name>
    <dbReference type="NCBI Taxonomy" id="378753"/>
    <lineage>
        <taxon>Bacteria</taxon>
        <taxon>Bacillati</taxon>
        <taxon>Actinomycetota</taxon>
        <taxon>Actinomycetes</taxon>
        <taxon>Micrococcales</taxon>
        <taxon>Micrococcaceae</taxon>
        <taxon>Kocuria</taxon>
    </lineage>
</organism>
<keyword id="KW-0001">2Fe-2S</keyword>
<keyword id="KW-0004">4Fe-4S</keyword>
<keyword id="KW-0093">Biotin biosynthesis</keyword>
<keyword id="KW-0408">Iron</keyword>
<keyword id="KW-0411">Iron-sulfur</keyword>
<keyword id="KW-0479">Metal-binding</keyword>
<keyword id="KW-1185">Reference proteome</keyword>
<keyword id="KW-0949">S-adenosyl-L-methionine</keyword>
<keyword id="KW-0808">Transferase</keyword>
<reference key="1">
    <citation type="journal article" date="2008" name="J. Bacteriol.">
        <title>Complete genome sequence of the soil actinomycete Kocuria rhizophila.</title>
        <authorList>
            <person name="Takarada H."/>
            <person name="Sekine M."/>
            <person name="Kosugi H."/>
            <person name="Matsuo Y."/>
            <person name="Fujisawa T."/>
            <person name="Omata S."/>
            <person name="Kishi E."/>
            <person name="Shimizu A."/>
            <person name="Tsukatani N."/>
            <person name="Tanikawa S."/>
            <person name="Fujita N."/>
            <person name="Harayama S."/>
        </authorList>
    </citation>
    <scope>NUCLEOTIDE SEQUENCE [LARGE SCALE GENOMIC DNA]</scope>
    <source>
        <strain>ATCC 9341 / DSM 348 / NBRC 103217 / DC2201</strain>
    </source>
</reference>
<sequence length="469" mass="48747">MFKNPAELADRVLAGTPVTPDEALDLLRTDDPGMLDLVAAAARLRREHFGMTVKVNYLVNLKSGLCAEDCGYCSQRLNAGTDILKYSWLSPEQAVEQAEYGIKGGASRVCLVASGRGPSNREVGNVTRTVEALKEQHPDVEVCACLGLLKDGQAESLSSAGVNAYNHNLNTAESHYESICSTHTYQDRVDTVERAKDAGLSPCSGLIVGMRETDEQLVEAVFALRDLGSDSVPVNFLMPFEGTPLAGTWQLSPQKCLKILAVVRFVCPDKEIRMAGGREMHLRSLQPLALHVVNSLFLGDYLTSEGQAAEADLAMIADAGFTVLGAGPDPSRDRHAGPADVQGSGAEQGAGERTTTPCGSVCGSAAGSSSGDGSAPDGGRAPADVSRSGPAEAVGSSPEDGSRNAGGPARTRSAAASSAPTGAGMSPALAALLGSDDGPEQDEDDTRVRVELSPTVRRRGAGTSVAPNA</sequence>
<dbReference type="EC" id="2.8.1.6" evidence="1"/>
<dbReference type="EMBL" id="AP009152">
    <property type="protein sequence ID" value="BAG28591.1"/>
    <property type="molecule type" value="Genomic_DNA"/>
</dbReference>
<dbReference type="RefSeq" id="WP_012397318.1">
    <property type="nucleotide sequence ID" value="NC_010617.1"/>
</dbReference>
<dbReference type="SMR" id="B2GLQ7"/>
<dbReference type="STRING" id="378753.KRH_02440"/>
<dbReference type="KEGG" id="krh:KRH_02440"/>
<dbReference type="eggNOG" id="COG0502">
    <property type="taxonomic scope" value="Bacteria"/>
</dbReference>
<dbReference type="HOGENOM" id="CLU_033172_2_0_11"/>
<dbReference type="OrthoDB" id="9786826at2"/>
<dbReference type="UniPathway" id="UPA00078">
    <property type="reaction ID" value="UER00162"/>
</dbReference>
<dbReference type="Proteomes" id="UP000008838">
    <property type="component" value="Chromosome"/>
</dbReference>
<dbReference type="GO" id="GO:0051537">
    <property type="term" value="F:2 iron, 2 sulfur cluster binding"/>
    <property type="evidence" value="ECO:0007669"/>
    <property type="project" value="UniProtKB-KW"/>
</dbReference>
<dbReference type="GO" id="GO:0051539">
    <property type="term" value="F:4 iron, 4 sulfur cluster binding"/>
    <property type="evidence" value="ECO:0007669"/>
    <property type="project" value="UniProtKB-KW"/>
</dbReference>
<dbReference type="GO" id="GO:0004076">
    <property type="term" value="F:biotin synthase activity"/>
    <property type="evidence" value="ECO:0007669"/>
    <property type="project" value="UniProtKB-UniRule"/>
</dbReference>
<dbReference type="GO" id="GO:0005506">
    <property type="term" value="F:iron ion binding"/>
    <property type="evidence" value="ECO:0007669"/>
    <property type="project" value="UniProtKB-UniRule"/>
</dbReference>
<dbReference type="GO" id="GO:0009102">
    <property type="term" value="P:biotin biosynthetic process"/>
    <property type="evidence" value="ECO:0007669"/>
    <property type="project" value="UniProtKB-UniRule"/>
</dbReference>
<dbReference type="CDD" id="cd01335">
    <property type="entry name" value="Radical_SAM"/>
    <property type="match status" value="1"/>
</dbReference>
<dbReference type="FunFam" id="3.20.20.70:FF:000026">
    <property type="entry name" value="Biotin synthase"/>
    <property type="match status" value="1"/>
</dbReference>
<dbReference type="Gene3D" id="3.20.20.70">
    <property type="entry name" value="Aldolase class I"/>
    <property type="match status" value="1"/>
</dbReference>
<dbReference type="HAMAP" id="MF_01694">
    <property type="entry name" value="BioB"/>
    <property type="match status" value="1"/>
</dbReference>
<dbReference type="InterPro" id="IPR013785">
    <property type="entry name" value="Aldolase_TIM"/>
</dbReference>
<dbReference type="InterPro" id="IPR010722">
    <property type="entry name" value="BATS_dom"/>
</dbReference>
<dbReference type="InterPro" id="IPR002684">
    <property type="entry name" value="Biotin_synth/BioAB"/>
</dbReference>
<dbReference type="InterPro" id="IPR006638">
    <property type="entry name" value="Elp3/MiaA/NifB-like_rSAM"/>
</dbReference>
<dbReference type="InterPro" id="IPR007197">
    <property type="entry name" value="rSAM"/>
</dbReference>
<dbReference type="NCBIfam" id="TIGR00433">
    <property type="entry name" value="bioB"/>
    <property type="match status" value="1"/>
</dbReference>
<dbReference type="PANTHER" id="PTHR22976">
    <property type="entry name" value="BIOTIN SYNTHASE"/>
    <property type="match status" value="1"/>
</dbReference>
<dbReference type="PANTHER" id="PTHR22976:SF2">
    <property type="entry name" value="BIOTIN SYNTHASE, MITOCHONDRIAL"/>
    <property type="match status" value="1"/>
</dbReference>
<dbReference type="Pfam" id="PF06968">
    <property type="entry name" value="BATS"/>
    <property type="match status" value="1"/>
</dbReference>
<dbReference type="Pfam" id="PF04055">
    <property type="entry name" value="Radical_SAM"/>
    <property type="match status" value="1"/>
</dbReference>
<dbReference type="SFLD" id="SFLDG01278">
    <property type="entry name" value="biotin_synthase_like"/>
    <property type="match status" value="1"/>
</dbReference>
<dbReference type="SFLD" id="SFLDS00029">
    <property type="entry name" value="Radical_SAM"/>
    <property type="match status" value="1"/>
</dbReference>
<dbReference type="SMART" id="SM00876">
    <property type="entry name" value="BATS"/>
    <property type="match status" value="1"/>
</dbReference>
<dbReference type="SMART" id="SM00729">
    <property type="entry name" value="Elp3"/>
    <property type="match status" value="1"/>
</dbReference>
<dbReference type="SUPFAM" id="SSF102114">
    <property type="entry name" value="Radical SAM enzymes"/>
    <property type="match status" value="1"/>
</dbReference>
<dbReference type="PROSITE" id="PS51918">
    <property type="entry name" value="RADICAL_SAM"/>
    <property type="match status" value="1"/>
</dbReference>
<comment type="function">
    <text evidence="1">Catalyzes the conversion of dethiobiotin (DTB) to biotin by the insertion of a sulfur atom into dethiobiotin via a radical-based mechanism.</text>
</comment>
<comment type="catalytic activity">
    <reaction evidence="1">
        <text>(4R,5S)-dethiobiotin + (sulfur carrier)-SH + 2 reduced [2Fe-2S]-[ferredoxin] + 2 S-adenosyl-L-methionine = (sulfur carrier)-H + biotin + 2 5'-deoxyadenosine + 2 L-methionine + 2 oxidized [2Fe-2S]-[ferredoxin]</text>
        <dbReference type="Rhea" id="RHEA:22060"/>
        <dbReference type="Rhea" id="RHEA-COMP:10000"/>
        <dbReference type="Rhea" id="RHEA-COMP:10001"/>
        <dbReference type="Rhea" id="RHEA-COMP:14737"/>
        <dbReference type="Rhea" id="RHEA-COMP:14739"/>
        <dbReference type="ChEBI" id="CHEBI:17319"/>
        <dbReference type="ChEBI" id="CHEBI:29917"/>
        <dbReference type="ChEBI" id="CHEBI:33737"/>
        <dbReference type="ChEBI" id="CHEBI:33738"/>
        <dbReference type="ChEBI" id="CHEBI:57586"/>
        <dbReference type="ChEBI" id="CHEBI:57844"/>
        <dbReference type="ChEBI" id="CHEBI:59789"/>
        <dbReference type="ChEBI" id="CHEBI:64428"/>
        <dbReference type="ChEBI" id="CHEBI:149473"/>
        <dbReference type="EC" id="2.8.1.6"/>
    </reaction>
</comment>
<comment type="cofactor">
    <cofactor evidence="1">
        <name>[4Fe-4S] cluster</name>
        <dbReference type="ChEBI" id="CHEBI:49883"/>
    </cofactor>
    <text evidence="1">Binds 1 [4Fe-4S] cluster. The cluster is coordinated with 3 cysteines and an exchangeable S-adenosyl-L-methionine.</text>
</comment>
<comment type="cofactor">
    <cofactor evidence="1">
        <name>[2Fe-2S] cluster</name>
        <dbReference type="ChEBI" id="CHEBI:190135"/>
    </cofactor>
    <text evidence="1">Binds 1 [2Fe-2S] cluster. The cluster is coordinated with 3 cysteines and 1 arginine.</text>
</comment>
<comment type="pathway">
    <text evidence="1">Cofactor biosynthesis; biotin biosynthesis; biotin from 7,8-diaminononanoate: step 2/2.</text>
</comment>
<comment type="subunit">
    <text evidence="1">Homodimer.</text>
</comment>
<comment type="similarity">
    <text evidence="1">Belongs to the radical SAM superfamily. Biotin synthase family.</text>
</comment>
<gene>
    <name evidence="1" type="primary">bioB</name>
    <name type="ordered locus">KRH_02440</name>
</gene>
<proteinExistence type="inferred from homology"/>
<name>BIOB_KOCRD</name>
<protein>
    <recommendedName>
        <fullName evidence="1">Biotin synthase</fullName>
        <ecNumber evidence="1">2.8.1.6</ecNumber>
    </recommendedName>
</protein>
<accession>B2GLQ7</accession>
<feature type="chain" id="PRO_0000381436" description="Biotin synthase">
    <location>
        <begin position="1"/>
        <end position="469"/>
    </location>
</feature>
<feature type="domain" description="Radical SAM core" evidence="2">
    <location>
        <begin position="51"/>
        <end position="278"/>
    </location>
</feature>
<feature type="region of interest" description="Disordered" evidence="3">
    <location>
        <begin position="326"/>
        <end position="469"/>
    </location>
</feature>
<feature type="compositionally biased region" description="Low complexity" evidence="3">
    <location>
        <begin position="363"/>
        <end position="384"/>
    </location>
</feature>
<feature type="compositionally biased region" description="Low complexity" evidence="3">
    <location>
        <begin position="405"/>
        <end position="428"/>
    </location>
</feature>
<feature type="binding site" evidence="1">
    <location>
        <position position="66"/>
    </location>
    <ligand>
        <name>[4Fe-4S] cluster</name>
        <dbReference type="ChEBI" id="CHEBI:49883"/>
        <note>4Fe-4S-S-AdoMet</note>
    </ligand>
</feature>
<feature type="binding site" evidence="1">
    <location>
        <position position="70"/>
    </location>
    <ligand>
        <name>[4Fe-4S] cluster</name>
        <dbReference type="ChEBI" id="CHEBI:49883"/>
        <note>4Fe-4S-S-AdoMet</note>
    </ligand>
</feature>
<feature type="binding site" evidence="1">
    <location>
        <position position="73"/>
    </location>
    <ligand>
        <name>[4Fe-4S] cluster</name>
        <dbReference type="ChEBI" id="CHEBI:49883"/>
        <note>4Fe-4S-S-AdoMet</note>
    </ligand>
</feature>
<feature type="binding site" evidence="1">
    <location>
        <position position="110"/>
    </location>
    <ligand>
        <name>[2Fe-2S] cluster</name>
        <dbReference type="ChEBI" id="CHEBI:190135"/>
    </ligand>
</feature>
<feature type="binding site" evidence="1">
    <location>
        <position position="143"/>
    </location>
    <ligand>
        <name>[2Fe-2S] cluster</name>
        <dbReference type="ChEBI" id="CHEBI:190135"/>
    </ligand>
</feature>
<feature type="binding site" evidence="1">
    <location>
        <position position="203"/>
    </location>
    <ligand>
        <name>[2Fe-2S] cluster</name>
        <dbReference type="ChEBI" id="CHEBI:190135"/>
    </ligand>
</feature>
<feature type="binding site" evidence="1">
    <location>
        <position position="273"/>
    </location>
    <ligand>
        <name>[2Fe-2S] cluster</name>
        <dbReference type="ChEBI" id="CHEBI:190135"/>
    </ligand>
</feature>
<evidence type="ECO:0000255" key="1">
    <source>
        <dbReference type="HAMAP-Rule" id="MF_01694"/>
    </source>
</evidence>
<evidence type="ECO:0000255" key="2">
    <source>
        <dbReference type="PROSITE-ProRule" id="PRU01266"/>
    </source>
</evidence>
<evidence type="ECO:0000256" key="3">
    <source>
        <dbReference type="SAM" id="MobiDB-lite"/>
    </source>
</evidence>